<evidence type="ECO:0000255" key="1"/>
<evidence type="ECO:0000255" key="2">
    <source>
        <dbReference type="PROSITE-ProRule" id="PRU00521"/>
    </source>
</evidence>
<evidence type="ECO:0000305" key="3"/>
<evidence type="ECO:0000312" key="4">
    <source>
        <dbReference type="MGI" id="MGI:2660711"/>
    </source>
</evidence>
<protein>
    <recommendedName>
        <fullName evidence="3">Olfactory receptor 8G17</fullName>
    </recommendedName>
    <alternativeName>
        <fullName>Odorant receptor M15</fullName>
    </alternativeName>
    <alternativeName>
        <fullName>Olfactory receptor 146</fullName>
    </alternativeName>
    <alternativeName>
        <fullName>Olfactory receptor 171-10</fullName>
    </alternativeName>
    <alternativeName>
        <fullName>Olfactory receptor 7D</fullName>
    </alternativeName>
</protein>
<feature type="chain" id="PRO_0000150823" description="Olfactory receptor 8G17">
    <location>
        <begin position="1"/>
        <end position="306"/>
    </location>
</feature>
<feature type="topological domain" description="Extracellular" evidence="1">
    <location>
        <begin position="1"/>
        <end position="28"/>
    </location>
</feature>
<feature type="transmembrane region" description="Helical; Name=1" evidence="1">
    <location>
        <begin position="29"/>
        <end position="49"/>
    </location>
</feature>
<feature type="topological domain" description="Cytoplasmic" evidence="1">
    <location>
        <begin position="50"/>
        <end position="56"/>
    </location>
</feature>
<feature type="transmembrane region" description="Helical; Name=2" evidence="1">
    <location>
        <begin position="57"/>
        <end position="77"/>
    </location>
</feature>
<feature type="topological domain" description="Extracellular" evidence="1">
    <location>
        <begin position="78"/>
        <end position="97"/>
    </location>
</feature>
<feature type="transmembrane region" description="Helical; Name=3" evidence="1">
    <location>
        <begin position="98"/>
        <end position="118"/>
    </location>
</feature>
<feature type="topological domain" description="Cytoplasmic" evidence="1">
    <location>
        <begin position="119"/>
        <end position="143"/>
    </location>
</feature>
<feature type="transmembrane region" description="Helical; Name=4" evidence="1">
    <location>
        <begin position="144"/>
        <end position="164"/>
    </location>
</feature>
<feature type="topological domain" description="Extracellular" evidence="1">
    <location>
        <begin position="165"/>
        <end position="196"/>
    </location>
</feature>
<feature type="transmembrane region" description="Helical; Name=5" evidence="1">
    <location>
        <begin position="197"/>
        <end position="217"/>
    </location>
</feature>
<feature type="topological domain" description="Cytoplasmic" evidence="1">
    <location>
        <begin position="218"/>
        <end position="236"/>
    </location>
</feature>
<feature type="transmembrane region" description="Helical; Name=6" evidence="1">
    <location>
        <begin position="237"/>
        <end position="257"/>
    </location>
</feature>
<feature type="topological domain" description="Extracellular" evidence="1">
    <location>
        <begin position="258"/>
        <end position="271"/>
    </location>
</feature>
<feature type="transmembrane region" description="Helical; Name=7" evidence="1">
    <location>
        <begin position="272"/>
        <end position="292"/>
    </location>
</feature>
<feature type="topological domain" description="Cytoplasmic" evidence="1">
    <location>
        <begin position="293"/>
        <end position="306"/>
    </location>
</feature>
<feature type="glycosylation site" description="N-linked (GlcNAc...) asparagine" evidence="1">
    <location>
        <position position="5"/>
    </location>
</feature>
<proteinExistence type="evidence at transcript level"/>
<organism>
    <name type="scientific">Mus musculus</name>
    <name type="common">Mouse</name>
    <dbReference type="NCBI Taxonomy" id="10090"/>
    <lineage>
        <taxon>Eukaryota</taxon>
        <taxon>Metazoa</taxon>
        <taxon>Chordata</taxon>
        <taxon>Craniata</taxon>
        <taxon>Vertebrata</taxon>
        <taxon>Euteleostomi</taxon>
        <taxon>Mammalia</taxon>
        <taxon>Eutheria</taxon>
        <taxon>Euarchontoglires</taxon>
        <taxon>Glires</taxon>
        <taxon>Rodentia</taxon>
        <taxon>Myomorpha</taxon>
        <taxon>Muroidea</taxon>
        <taxon>Muridae</taxon>
        <taxon>Murinae</taxon>
        <taxon>Mus</taxon>
        <taxon>Mus</taxon>
    </lineage>
</organism>
<dbReference type="EMBL" id="AF282300">
    <property type="protein sequence ID" value="AAG39885.1"/>
    <property type="molecule type" value="Genomic_DNA"/>
</dbReference>
<dbReference type="EMBL" id="AY073348">
    <property type="protein sequence ID" value="AAL61011.1"/>
    <property type="molecule type" value="Genomic_DNA"/>
</dbReference>
<dbReference type="EMBL" id="AY318123">
    <property type="protein sequence ID" value="AAP71405.1"/>
    <property type="molecule type" value="Genomic_DNA"/>
</dbReference>
<dbReference type="EMBL" id="BC132188">
    <property type="protein sequence ID" value="AAI32189.1"/>
    <property type="molecule type" value="mRNA"/>
</dbReference>
<dbReference type="EMBL" id="BC132190">
    <property type="protein sequence ID" value="AAI32191.1"/>
    <property type="molecule type" value="mRNA"/>
</dbReference>
<dbReference type="EMBL" id="U28773">
    <property type="protein sequence ID" value="AAC52396.1"/>
    <property type="molecule type" value="Genomic_DNA"/>
</dbReference>
<dbReference type="CCDS" id="CCDS23036.1"/>
<dbReference type="RefSeq" id="NP_666958.1">
    <property type="nucleotide sequence ID" value="NM_146747.1"/>
</dbReference>
<dbReference type="SMR" id="Q60884"/>
<dbReference type="FunCoup" id="Q60884">
    <property type="interactions" value="1189"/>
</dbReference>
<dbReference type="STRING" id="10090.ENSMUSP00000149294"/>
<dbReference type="GlyCosmos" id="Q60884">
    <property type="glycosylation" value="1 site, No reported glycans"/>
</dbReference>
<dbReference type="GlyGen" id="Q60884">
    <property type="glycosylation" value="1 site"/>
</dbReference>
<dbReference type="iPTMnet" id="Q60884"/>
<dbReference type="PhosphoSitePlus" id="Q60884"/>
<dbReference type="PaxDb" id="10090-ENSMUSP00000073352"/>
<dbReference type="Ensembl" id="ENSMUST00000073671.3">
    <property type="protein sequence ID" value="ENSMUSP00000073352.3"/>
    <property type="gene ID" value="ENSMUSG00000058820.4"/>
</dbReference>
<dbReference type="Ensembl" id="ENSMUST00000214410.2">
    <property type="protein sequence ID" value="ENSMUSP00000149294.2"/>
    <property type="gene ID" value="ENSMUSG00000058820.4"/>
</dbReference>
<dbReference type="GeneID" id="258742"/>
<dbReference type="KEGG" id="mmu:258742"/>
<dbReference type="UCSC" id="uc009oxn.1">
    <property type="organism name" value="mouse"/>
</dbReference>
<dbReference type="AGR" id="MGI:2660711"/>
<dbReference type="CTD" id="258742"/>
<dbReference type="MGI" id="MGI:2660711">
    <property type="gene designation" value="Or8g17"/>
</dbReference>
<dbReference type="VEuPathDB" id="HostDB:ENSMUSG00000058820"/>
<dbReference type="eggNOG" id="ENOG502SJS1">
    <property type="taxonomic scope" value="Eukaryota"/>
</dbReference>
<dbReference type="GeneTree" id="ENSGT01040000240383"/>
<dbReference type="HOGENOM" id="CLU_012526_1_0_1"/>
<dbReference type="InParanoid" id="Q60884"/>
<dbReference type="OMA" id="AISECHV"/>
<dbReference type="OrthoDB" id="9444602at2759"/>
<dbReference type="PhylomeDB" id="Q60884"/>
<dbReference type="TreeFam" id="TF352753"/>
<dbReference type="BioGRID-ORCS" id="258742">
    <property type="hits" value="5 hits in 68 CRISPR screens"/>
</dbReference>
<dbReference type="PRO" id="PR:Q60884"/>
<dbReference type="Proteomes" id="UP000000589">
    <property type="component" value="Chromosome 9"/>
</dbReference>
<dbReference type="RNAct" id="Q60884">
    <property type="molecule type" value="protein"/>
</dbReference>
<dbReference type="Bgee" id="ENSMUSG00000058820">
    <property type="expression patterns" value="Expressed in adrenal gland and 1 other cell type or tissue"/>
</dbReference>
<dbReference type="ExpressionAtlas" id="Q60884">
    <property type="expression patterns" value="baseline and differential"/>
</dbReference>
<dbReference type="GO" id="GO:0016020">
    <property type="term" value="C:membrane"/>
    <property type="evidence" value="ECO:0000247"/>
    <property type="project" value="MGI"/>
</dbReference>
<dbReference type="GO" id="GO:0005886">
    <property type="term" value="C:plasma membrane"/>
    <property type="evidence" value="ECO:0007669"/>
    <property type="project" value="UniProtKB-SubCell"/>
</dbReference>
<dbReference type="GO" id="GO:0004930">
    <property type="term" value="F:G protein-coupled receptor activity"/>
    <property type="evidence" value="ECO:0007669"/>
    <property type="project" value="UniProtKB-KW"/>
</dbReference>
<dbReference type="GO" id="GO:0004984">
    <property type="term" value="F:olfactory receptor activity"/>
    <property type="evidence" value="ECO:0000247"/>
    <property type="project" value="MGI"/>
</dbReference>
<dbReference type="GO" id="GO:0007186">
    <property type="term" value="P:G protein-coupled receptor signaling pathway"/>
    <property type="evidence" value="ECO:0000247"/>
    <property type="project" value="MGI"/>
</dbReference>
<dbReference type="GO" id="GO:0007608">
    <property type="term" value="P:sensory perception of smell"/>
    <property type="evidence" value="ECO:0000247"/>
    <property type="project" value="MGI"/>
</dbReference>
<dbReference type="FunFam" id="1.20.1070.10:FF:000004">
    <property type="entry name" value="Olfactory receptor"/>
    <property type="match status" value="1"/>
</dbReference>
<dbReference type="Gene3D" id="1.20.1070.10">
    <property type="entry name" value="Rhodopsin 7-helix transmembrane proteins"/>
    <property type="match status" value="1"/>
</dbReference>
<dbReference type="InterPro" id="IPR000276">
    <property type="entry name" value="GPCR_Rhodpsn"/>
</dbReference>
<dbReference type="InterPro" id="IPR017452">
    <property type="entry name" value="GPCR_Rhodpsn_7TM"/>
</dbReference>
<dbReference type="InterPro" id="IPR000725">
    <property type="entry name" value="Olfact_rcpt"/>
</dbReference>
<dbReference type="PANTHER" id="PTHR48018">
    <property type="entry name" value="OLFACTORY RECEPTOR"/>
    <property type="match status" value="1"/>
</dbReference>
<dbReference type="Pfam" id="PF13853">
    <property type="entry name" value="7tm_4"/>
    <property type="match status" value="1"/>
</dbReference>
<dbReference type="PRINTS" id="PR00237">
    <property type="entry name" value="GPCRRHODOPSN"/>
</dbReference>
<dbReference type="PRINTS" id="PR00245">
    <property type="entry name" value="OLFACTORYR"/>
</dbReference>
<dbReference type="SUPFAM" id="SSF81321">
    <property type="entry name" value="Family A G protein-coupled receptor-like"/>
    <property type="match status" value="1"/>
</dbReference>
<dbReference type="PROSITE" id="PS00237">
    <property type="entry name" value="G_PROTEIN_RECEP_F1_1"/>
    <property type="match status" value="1"/>
</dbReference>
<dbReference type="PROSITE" id="PS50262">
    <property type="entry name" value="G_PROTEIN_RECEP_F1_2"/>
    <property type="match status" value="1"/>
</dbReference>
<gene>
    <name evidence="4" type="primary">Or8g17</name>
    <name evidence="4" type="synonym">Mor171-10</name>
    <name evidence="4" type="synonym">Olfr146</name>
    <name type="synonym">Olfr7</name>
</gene>
<name>O8G17_MOUSE</name>
<sequence length="306" mass="34373">MEKGNQSTVNKFFLSGLTEQPELQLPLFLLFLGIYLLTVLGNLGMIILILLSSYLHTPMYFFLSSLSFIDFCQSTVITPKMLVKFVREKNEISYPECITQLCFFVIFAVSESYMLAAMAYDRYVAICSPLLYSSIMSQHKCLSLVLGVYILGIVCASAHVGCIFRIDFCKSDLINHYFCDLISILNLSCSNIFVNDLVILIFSLINTIFPTLTILSSYAFIIISILRIKSTEGRSKAFSTCSSHISAVAIFYISAGFTYLNPSSSHSMDEGKVSSIFYTIIVPMLNPLIYSLRNKDVKIALKKMIE</sequence>
<reference key="1">
    <citation type="journal article" date="2000" name="Mamm. Genome">
        <title>Characterization of a cluster comprising 100 odorant receptor genes in mouse.</title>
        <authorList>
            <person name="Xie S.Y."/>
            <person name="Feinstein P."/>
            <person name="Mombaerts P."/>
        </authorList>
    </citation>
    <scope>NUCLEOTIDE SEQUENCE [GENOMIC DNA]</scope>
    <source>
        <strain>129/SvJ</strain>
    </source>
</reference>
<reference key="2">
    <citation type="journal article" date="2002" name="Nat. Neurosci.">
        <title>The olfactory receptor gene superfamily of the mouse.</title>
        <authorList>
            <person name="Zhang X."/>
            <person name="Firestein S."/>
        </authorList>
    </citation>
    <scope>NUCLEOTIDE SEQUENCE [GENOMIC DNA]</scope>
</reference>
<reference key="3">
    <citation type="journal article" date="2002" name="Hum. Mol. Genet.">
        <title>Different evolutionary processes shaped the mouse and human olfactory receptor gene families.</title>
        <authorList>
            <person name="Young J.M."/>
            <person name="Friedman C."/>
            <person name="Williams E.M."/>
            <person name="Ross J.A."/>
            <person name="Tonnes-Priddy L."/>
            <person name="Trask B.J."/>
        </authorList>
    </citation>
    <scope>NUCLEOTIDE SEQUENCE [GENOMIC DNA]</scope>
</reference>
<reference key="4">
    <citation type="journal article" date="2002" name="Hum. Mol. Genet.">
        <authorList>
            <person name="Young J.M."/>
            <person name="Friedman C."/>
            <person name="Williams E.M."/>
            <person name="Ross J.A."/>
            <person name="Tonnes-Priddy L."/>
            <person name="Trask B.J."/>
        </authorList>
    </citation>
    <scope>ERRATUM OF PUBMED:11875048</scope>
</reference>
<reference key="5">
    <citation type="journal article" date="2004" name="Genome Res.">
        <title>The status, quality, and expansion of the NIH full-length cDNA project: the Mammalian Gene Collection (MGC).</title>
        <authorList>
            <consortium name="The MGC Project Team"/>
        </authorList>
    </citation>
    <scope>NUCLEOTIDE SEQUENCE [LARGE SCALE MRNA]</scope>
    <source>
        <tissue>Brain</tissue>
    </source>
</reference>
<reference key="6">
    <citation type="journal article" date="1996" name="Proc. Natl. Acad. Sci. U.S.A.">
        <title>The chromosomal distribution of mouse odorant receptor genes.</title>
        <authorList>
            <person name="Sullivan S.L."/>
            <person name="Adamson M.C."/>
            <person name="Ressler K.J."/>
            <person name="Kozak C.A."/>
            <person name="Buck L.B."/>
        </authorList>
    </citation>
    <scope>NUCLEOTIDE SEQUENCE [GENOMIC DNA] OF 128-239</scope>
    <source>
        <strain>C57BL/6J</strain>
    </source>
</reference>
<accession>Q60884</accession>
<accession>A3KMK0</accession>
<accession>Q9EQ89</accession>
<comment type="function">
    <text evidence="3">Odorant receptor.</text>
</comment>
<comment type="subcellular location">
    <subcellularLocation>
        <location evidence="3">Cell membrane</location>
        <topology evidence="1">Multi-pass membrane protein</topology>
    </subcellularLocation>
</comment>
<comment type="similarity">
    <text evidence="2">Belongs to the G-protein coupled receptor 1 family.</text>
</comment>
<keyword id="KW-1003">Cell membrane</keyword>
<keyword id="KW-0297">G-protein coupled receptor</keyword>
<keyword id="KW-0325">Glycoprotein</keyword>
<keyword id="KW-0472">Membrane</keyword>
<keyword id="KW-0552">Olfaction</keyword>
<keyword id="KW-0675">Receptor</keyword>
<keyword id="KW-1185">Reference proteome</keyword>
<keyword id="KW-0716">Sensory transduction</keyword>
<keyword id="KW-0807">Transducer</keyword>
<keyword id="KW-0812">Transmembrane</keyword>
<keyword id="KW-1133">Transmembrane helix</keyword>